<comment type="catalytic activity">
    <reaction evidence="1">
        <text>3'-dephospho-CoA + ATP = 2'-(5''-triphospho-alpha-D-ribosyl)-3'-dephospho-CoA + adenine</text>
        <dbReference type="Rhea" id="RHEA:15117"/>
        <dbReference type="ChEBI" id="CHEBI:16708"/>
        <dbReference type="ChEBI" id="CHEBI:30616"/>
        <dbReference type="ChEBI" id="CHEBI:57328"/>
        <dbReference type="ChEBI" id="CHEBI:61378"/>
        <dbReference type="EC" id="2.4.2.52"/>
    </reaction>
</comment>
<comment type="similarity">
    <text evidence="1">Belongs to the CitG/MdcB family.</text>
</comment>
<proteinExistence type="inferred from homology"/>
<keyword id="KW-0067">ATP-binding</keyword>
<keyword id="KW-0547">Nucleotide-binding</keyword>
<keyword id="KW-0808">Transferase</keyword>
<reference key="1">
    <citation type="journal article" date="2009" name="PLoS Pathog.">
        <title>Genomic evidence for the evolution of Streptococcus equi: host restriction, increased virulence, and genetic exchange with human pathogens.</title>
        <authorList>
            <person name="Holden M.T.G."/>
            <person name="Heather Z."/>
            <person name="Paillot R."/>
            <person name="Steward K.F."/>
            <person name="Webb K."/>
            <person name="Ainslie F."/>
            <person name="Jourdan T."/>
            <person name="Bason N.C."/>
            <person name="Holroyd N.E."/>
            <person name="Mungall K."/>
            <person name="Quail M.A."/>
            <person name="Sanders M."/>
            <person name="Simmonds M."/>
            <person name="Willey D."/>
            <person name="Brooks K."/>
            <person name="Aanensen D.M."/>
            <person name="Spratt B.G."/>
            <person name="Jolley K.A."/>
            <person name="Maiden M.C.J."/>
            <person name="Kehoe M."/>
            <person name="Chanter N."/>
            <person name="Bentley S.D."/>
            <person name="Robinson C."/>
            <person name="Maskell D.J."/>
            <person name="Parkhill J."/>
            <person name="Waller A.S."/>
        </authorList>
    </citation>
    <scope>NUCLEOTIDE SEQUENCE [LARGE SCALE GENOMIC DNA]</scope>
    <source>
        <strain>H70</strain>
    </source>
</reference>
<name>CITG_STRS7</name>
<organism>
    <name type="scientific">Streptococcus equi subsp. zooepidemicus (strain H70)</name>
    <dbReference type="NCBI Taxonomy" id="553483"/>
    <lineage>
        <taxon>Bacteria</taxon>
        <taxon>Bacillati</taxon>
        <taxon>Bacillota</taxon>
        <taxon>Bacilli</taxon>
        <taxon>Lactobacillales</taxon>
        <taxon>Streptococcaceae</taxon>
        <taxon>Streptococcus</taxon>
    </lineage>
</organism>
<protein>
    <recommendedName>
        <fullName evidence="1">Probable 2-(5''-triphosphoribosyl)-3'-dephosphocoenzyme-A synthase</fullName>
        <shortName evidence="1">2-(5''-triphosphoribosyl)-3'-dephospho-CoA synthase</shortName>
        <ecNumber evidence="1">2.4.2.52</ecNumber>
    </recommendedName>
</protein>
<dbReference type="EC" id="2.4.2.52" evidence="1"/>
<dbReference type="EMBL" id="FM204884">
    <property type="protein sequence ID" value="CAW99289.1"/>
    <property type="molecule type" value="Genomic_DNA"/>
</dbReference>
<dbReference type="KEGG" id="seq:SZO_09830"/>
<dbReference type="eggNOG" id="COG1767">
    <property type="taxonomic scope" value="Bacteria"/>
</dbReference>
<dbReference type="HOGENOM" id="CLU_056179_1_0_9"/>
<dbReference type="Proteomes" id="UP000001368">
    <property type="component" value="Chromosome"/>
</dbReference>
<dbReference type="GO" id="GO:0005524">
    <property type="term" value="F:ATP binding"/>
    <property type="evidence" value="ECO:0007669"/>
    <property type="project" value="UniProtKB-KW"/>
</dbReference>
<dbReference type="GO" id="GO:0046917">
    <property type="term" value="F:triphosphoribosyl-dephospho-CoA synthase activity"/>
    <property type="evidence" value="ECO:0007669"/>
    <property type="project" value="UniProtKB-UniRule"/>
</dbReference>
<dbReference type="GO" id="GO:0051191">
    <property type="term" value="P:prosthetic group biosynthetic process"/>
    <property type="evidence" value="ECO:0007669"/>
    <property type="project" value="TreeGrafter"/>
</dbReference>
<dbReference type="Gene3D" id="1.10.4200.10">
    <property type="entry name" value="Triphosphoribosyl-dephospho-CoA protein"/>
    <property type="match status" value="1"/>
</dbReference>
<dbReference type="HAMAP" id="MF_00397">
    <property type="entry name" value="CitG"/>
    <property type="match status" value="1"/>
</dbReference>
<dbReference type="InterPro" id="IPR002736">
    <property type="entry name" value="CitG"/>
</dbReference>
<dbReference type="InterPro" id="IPR017551">
    <property type="entry name" value="TriPribosyl-deP-CoA_syn_CitG"/>
</dbReference>
<dbReference type="NCBIfam" id="TIGR03125">
    <property type="entry name" value="citrate_citG"/>
    <property type="match status" value="1"/>
</dbReference>
<dbReference type="PANTHER" id="PTHR30201:SF2">
    <property type="entry name" value="2-(5''-TRIPHOSPHORIBOSYL)-3'-DEPHOSPHOCOENZYME-A SYNTHASE"/>
    <property type="match status" value="1"/>
</dbReference>
<dbReference type="PANTHER" id="PTHR30201">
    <property type="entry name" value="TRIPHOSPHORIBOSYL-DEPHOSPHO-COA SYNTHASE"/>
    <property type="match status" value="1"/>
</dbReference>
<dbReference type="Pfam" id="PF01874">
    <property type="entry name" value="CitG"/>
    <property type="match status" value="1"/>
</dbReference>
<feature type="chain" id="PRO_1000205875" description="Probable 2-(5''-triphosphoribosyl)-3'-dephosphocoenzyme-A synthase">
    <location>
        <begin position="1"/>
        <end position="294"/>
    </location>
</feature>
<accession>C0MFF6</accession>
<gene>
    <name evidence="1" type="primary">citG</name>
    <name type="ordered locus">SZO_09830</name>
</gene>
<sequence length="294" mass="32393">MTKKVFDDISRLALKALLYEVSLSPKPGLVDQLDNGAHDDMSFLTFVDSALALAPFFNTYLDIGFYHAKEDPGLIFERLRVSGIEAEQAMFSATKGVNTHKGVNFSLALLLGATGMYLASQPQLLAHVTAFTEEDSLAICQLVKPLTAHLLETDFGSLDLKKELTYGEKLFLDYGIKGPRGEASEGYPTIAHKALPFLRKSLRSTDQETAQLQLLVYLMSIVEDGNLIHRGGIKAWRQVKQDMLLLHNSSLSTADLKAALSAYNDKLIQKHLSPGGTADLLVLSLYFAFLENQL</sequence>
<evidence type="ECO:0000255" key="1">
    <source>
        <dbReference type="HAMAP-Rule" id="MF_00397"/>
    </source>
</evidence>